<name>PHO80_YEAST</name>
<organism>
    <name type="scientific">Saccharomyces cerevisiae (strain ATCC 204508 / S288c)</name>
    <name type="common">Baker's yeast</name>
    <dbReference type="NCBI Taxonomy" id="559292"/>
    <lineage>
        <taxon>Eukaryota</taxon>
        <taxon>Fungi</taxon>
        <taxon>Dikarya</taxon>
        <taxon>Ascomycota</taxon>
        <taxon>Saccharomycotina</taxon>
        <taxon>Saccharomycetes</taxon>
        <taxon>Saccharomycetales</taxon>
        <taxon>Saccharomycetaceae</taxon>
        <taxon>Saccharomyces</taxon>
    </lineage>
</organism>
<keyword id="KW-0002">3D-structure</keyword>
<keyword id="KW-0195">Cyclin</keyword>
<keyword id="KW-0963">Cytoplasm</keyword>
<keyword id="KW-0539">Nucleus</keyword>
<keyword id="KW-0597">Phosphoprotein</keyword>
<keyword id="KW-1185">Reference proteome</keyword>
<evidence type="ECO:0000256" key="1">
    <source>
        <dbReference type="SAM" id="MobiDB-lite"/>
    </source>
</evidence>
<evidence type="ECO:0000269" key="2">
    <source>
    </source>
</evidence>
<evidence type="ECO:0000269" key="3">
    <source>
    </source>
</evidence>
<evidence type="ECO:0000269" key="4">
    <source>
    </source>
</evidence>
<evidence type="ECO:0000269" key="5">
    <source>
    </source>
</evidence>
<evidence type="ECO:0000269" key="6">
    <source>
    </source>
</evidence>
<evidence type="ECO:0000269" key="7">
    <source>
    </source>
</evidence>
<evidence type="ECO:0000269" key="8">
    <source>
    </source>
</evidence>
<evidence type="ECO:0000269" key="9">
    <source>
    </source>
</evidence>
<evidence type="ECO:0000269" key="10">
    <source>
    </source>
</evidence>
<evidence type="ECO:0000269" key="11">
    <source>
    </source>
</evidence>
<evidence type="ECO:0000269" key="12">
    <source>
    </source>
</evidence>
<evidence type="ECO:0000269" key="13">
    <source>
    </source>
</evidence>
<evidence type="ECO:0000305" key="14"/>
<evidence type="ECO:0007829" key="15">
    <source>
        <dbReference type="PDB" id="2PK9"/>
    </source>
</evidence>
<evidence type="ECO:0007829" key="16">
    <source>
        <dbReference type="PDB" id="2PMI"/>
    </source>
</evidence>
<comment type="function">
    <text evidence="3 8 9 11 12 13">Cyclin partner of the cyclin-dependent kinase (CDK) PHO85. Negatively regulates the expression of phosphate-starvation-responsive genes under phosphate-rich conditions. The PHO80-PHO85 cyclin-CDK holoenzyme phosphorylates and inactivates the transcription factor PHO4, by preventing its association with the transcription factor PHO2 and the nuclear import receptor PSE1, and by promoting association with the nuclear export receptor MSN5, excluding PHO4 from the nucleus. PHO80-PHO85 phosphorylates and inactivates protein kinase RIM15 by retaining it in the cytoplasm, antagonizing RIM15-induced entry into stationary phase. PHO80-PHO85 also phosphorylates and inactivates the calcineurin-responsive transcription factor CRZ1, linking PHO85 to calcium signaling.</text>
</comment>
<comment type="activity regulation">
    <text evidence="7">Inhibited by the CDK inhibitor (CKI) PHO81 in response to phosphate starvation.</text>
</comment>
<comment type="subunit">
    <text evidence="7 8 9 10">Forms a cyclin-CDK complex with PHO85. PHO80-PHO85 forms a stable complex with its inhibitor PHO81 under both high- and low-phosphate conditions, but PHO81 only inhibits the kinase upon phosphate starvation. Interacts with transcription factor PHO4.</text>
</comment>
<comment type="interaction">
    <interactant intactId="EBI-13310">
        <id>P20052</id>
    </interactant>
    <interactant intactId="EBI-13327">
        <id>P17157</id>
        <label>PHO85</label>
    </interactant>
    <organismsDiffer>false</organismsDiffer>
    <experiments>5</experiments>
</comment>
<comment type="subcellular location">
    <subcellularLocation>
        <location evidence="13">Cytoplasm</location>
    </subcellularLocation>
    <subcellularLocation>
        <location evidence="13">Nucleus</location>
    </subcellularLocation>
    <text>Localizes predominantly to the cytoplasm under phosphate-rich conditions and concentrates in the nucleus upon phosphate starvation.</text>
</comment>
<comment type="PTM">
    <text evidence="2 3 4 9 11">Phosphorylation of Ser-267 by PHO85 is required to form an active cyclin-kinase complex and for function.</text>
</comment>
<comment type="similarity">
    <text evidence="14">Belongs to the cyclin family. PHO80 subfamily.</text>
</comment>
<gene>
    <name type="primary">PHO80</name>
    <name type="synonym">AGS3</name>
    <name type="synonym">TUP7</name>
    <name type="synonym">VAC5</name>
    <name type="ordered locus">YOL001W</name>
    <name type="ORF">O2505</name>
    <name type="ORF">UNB293</name>
</gene>
<proteinExistence type="evidence at protein level"/>
<reference key="1">
    <citation type="journal article" date="1988" name="Nucleic Acids Res.">
        <title>Structure and expression of the PHO80 gene of Saccharomyces cerevisiae.</title>
        <authorList>
            <person name="Madden S.L."/>
            <person name="Creasy C.L."/>
            <person name="Srinivas V."/>
            <person name="Fawcett W."/>
            <person name="Bergman L.W."/>
        </authorList>
    </citation>
    <scope>NUCLEOTIDE SEQUENCE [GENOMIC DNA]</scope>
    <scope>MUTAGENESIS OF LEU-163</scope>
</reference>
<reference key="2">
    <citation type="journal article" date="1986" name="Yeast">
        <title>Cloning and sequencing of the PHO80 gene and CEN15 of Saccharomyces cerevisiae.</title>
        <authorList>
            <person name="Toh-e A."/>
            <person name="Shimauchi T."/>
        </authorList>
    </citation>
    <scope>NUCLEOTIDE SEQUENCE [GENOMIC DNA]</scope>
</reference>
<reference key="3">
    <citation type="journal article" date="1996" name="Yeast">
        <title>The sequence of a 30 kb fragment on the left arm of chromosome XV from Saccharomyces cerevisiae reveals 15 open reading frames, five of which correspond to previously identified genes.</title>
        <authorList>
            <person name="Sterky F."/>
            <person name="Holmberg A."/>
            <person name="Pettersson B."/>
            <person name="Uhlen M."/>
        </authorList>
    </citation>
    <scope>NUCLEOTIDE SEQUENCE [GENOMIC DNA]</scope>
</reference>
<reference key="4">
    <citation type="journal article" date="1997" name="Nature">
        <title>The nucleotide sequence of Saccharomyces cerevisiae chromosome XV.</title>
        <authorList>
            <person name="Dujon B."/>
            <person name="Albermann K."/>
            <person name="Aldea M."/>
            <person name="Alexandraki D."/>
            <person name="Ansorge W."/>
            <person name="Arino J."/>
            <person name="Benes V."/>
            <person name="Bohn C."/>
            <person name="Bolotin-Fukuhara M."/>
            <person name="Bordonne R."/>
            <person name="Boyer J."/>
            <person name="Camasses A."/>
            <person name="Casamayor A."/>
            <person name="Casas C."/>
            <person name="Cheret G."/>
            <person name="Cziepluch C."/>
            <person name="Daignan-Fornier B."/>
            <person name="Dang V.-D."/>
            <person name="de Haan M."/>
            <person name="Delius H."/>
            <person name="Durand P."/>
            <person name="Fairhead C."/>
            <person name="Feldmann H."/>
            <person name="Gaillon L."/>
            <person name="Galisson F."/>
            <person name="Gamo F.-J."/>
            <person name="Gancedo C."/>
            <person name="Goffeau A."/>
            <person name="Goulding S.E."/>
            <person name="Grivell L.A."/>
            <person name="Habbig B."/>
            <person name="Hand N.J."/>
            <person name="Hani J."/>
            <person name="Hattenhorst U."/>
            <person name="Hebling U."/>
            <person name="Hernando Y."/>
            <person name="Herrero E."/>
            <person name="Heumann K."/>
            <person name="Hiesel R."/>
            <person name="Hilger F."/>
            <person name="Hofmann B."/>
            <person name="Hollenberg C.P."/>
            <person name="Hughes B."/>
            <person name="Jauniaux J.-C."/>
            <person name="Kalogeropoulos A."/>
            <person name="Katsoulou C."/>
            <person name="Kordes E."/>
            <person name="Lafuente M.J."/>
            <person name="Landt O."/>
            <person name="Louis E.J."/>
            <person name="Maarse A.C."/>
            <person name="Madania A."/>
            <person name="Mannhaupt G."/>
            <person name="Marck C."/>
            <person name="Martin R.P."/>
            <person name="Mewes H.-W."/>
            <person name="Michaux G."/>
            <person name="Paces V."/>
            <person name="Parle-McDermott A.G."/>
            <person name="Pearson B.M."/>
            <person name="Perrin A."/>
            <person name="Pettersson B."/>
            <person name="Poch O."/>
            <person name="Pohl T.M."/>
            <person name="Poirey R."/>
            <person name="Portetelle D."/>
            <person name="Pujol A."/>
            <person name="Purnelle B."/>
            <person name="Ramezani Rad M."/>
            <person name="Rechmann S."/>
            <person name="Schwager C."/>
            <person name="Schweizer M."/>
            <person name="Sor F."/>
            <person name="Sterky F."/>
            <person name="Tarassov I.A."/>
            <person name="Teodoru C."/>
            <person name="Tettelin H."/>
            <person name="Thierry A."/>
            <person name="Tobiasch E."/>
            <person name="Tzermia M."/>
            <person name="Uhlen M."/>
            <person name="Unseld M."/>
            <person name="Valens M."/>
            <person name="Vandenbol M."/>
            <person name="Vetter I."/>
            <person name="Vlcek C."/>
            <person name="Voet M."/>
            <person name="Volckaert G."/>
            <person name="Voss H."/>
            <person name="Wambutt R."/>
            <person name="Wedler H."/>
            <person name="Wiemann S."/>
            <person name="Winsor B."/>
            <person name="Wolfe K.H."/>
            <person name="Zollner A."/>
            <person name="Zumstein E."/>
            <person name="Kleine K."/>
        </authorList>
    </citation>
    <scope>NUCLEOTIDE SEQUENCE [LARGE SCALE GENOMIC DNA]</scope>
    <source>
        <strain>ATCC 204508 / S288c</strain>
    </source>
</reference>
<reference key="5">
    <citation type="journal article" date="2014" name="G3 (Bethesda)">
        <title>The reference genome sequence of Saccharomyces cerevisiae: Then and now.</title>
        <authorList>
            <person name="Engel S.R."/>
            <person name="Dietrich F.S."/>
            <person name="Fisk D.G."/>
            <person name="Binkley G."/>
            <person name="Balakrishnan R."/>
            <person name="Costanzo M.C."/>
            <person name="Dwight S.S."/>
            <person name="Hitz B.C."/>
            <person name="Karra K."/>
            <person name="Nash R.S."/>
            <person name="Weng S."/>
            <person name="Wong E.D."/>
            <person name="Lloyd P."/>
            <person name="Skrzypek M.S."/>
            <person name="Miyasato S.R."/>
            <person name="Simison M."/>
            <person name="Cherry J.M."/>
        </authorList>
    </citation>
    <scope>GENOME REANNOTATION</scope>
    <source>
        <strain>ATCC 204508 / S288c</strain>
    </source>
</reference>
<reference key="6">
    <citation type="journal article" date="1987" name="Nucleic Acids Res.">
        <title>Sequence of the region 5' to the negative regulatory gene PHO80 of Saccharomyces cerevisiae.</title>
        <authorList>
            <person name="Gilliquet V."/>
            <person name="Legrain M."/>
            <person name="Hilger F."/>
        </authorList>
    </citation>
    <scope>NUCLEOTIDE SEQUENCE [GENOMIC DNA] OF 1-36</scope>
    <source>
        <strain>S288c / GRF88</strain>
    </source>
</reference>
<reference key="7">
    <citation type="journal article" date="1990" name="Gene">
        <title>Negative regulatory elements of the Saccharomyces cerevisiae PHO system: interaction between PHO80 and PHO85 proteins.</title>
        <authorList>
            <person name="Gilliquet V."/>
            <person name="Legrain M."/>
            <person name="Berben G.H.F."/>
            <person name="Hilger F."/>
        </authorList>
    </citation>
    <scope>NUCLEOTIDE SEQUENCE [GENOMIC DNA] OF 217-293</scope>
    <scope>MUTAGENESIS OF GLY-229</scope>
</reference>
<reference key="8">
    <citation type="journal article" date="1994" name="EMBO J.">
        <title>The activation domain of a basic helix-loop-helix protein is masked by repressor interaction with domains distinct from that required for transcription regulation.</title>
        <authorList>
            <person name="Jayaraman P.-S."/>
            <person name="Hirst K."/>
            <person name="Goding C.R."/>
        </authorList>
    </citation>
    <scope>INTERACTION WITH PHO4</scope>
</reference>
<reference key="9">
    <citation type="journal article" date="1994" name="EMBO J.">
        <title>The transcription factor, the Cdk, its cyclin and their regulator: directing the transcriptional response to a nutritional signal.</title>
        <authorList>
            <person name="Hirst K."/>
            <person name="Fisher F."/>
            <person name="McAndrew P.C."/>
            <person name="Goding C.R."/>
        </authorList>
    </citation>
    <scope>FUNCTION</scope>
    <scope>INTERACTION WITH PHO4 AND PHO81</scope>
</reference>
<reference key="10">
    <citation type="journal article" date="1994" name="Science">
        <title>Phosphorylation of the transcription factor PHO4 by a cyclin-CDK complex, PHO80-PHO85.</title>
        <authorList>
            <person name="Kaffman A."/>
            <person name="Herskowitz I."/>
            <person name="Tjian R."/>
            <person name="O'Shea E.K."/>
        </authorList>
    </citation>
    <scope>FUNCTION</scope>
    <scope>INTERACTION WITH PHO85</scope>
    <scope>PHOSPHORYLATION OF PHO4</scope>
</reference>
<reference key="11">
    <citation type="journal article" date="1994" name="Science">
        <title>Phosphate-regulated inactivation of the kinase PHO80-PHO85 by the CDK inhibitor PHO81.</title>
        <authorList>
            <person name="Schneider K.R."/>
            <person name="Smith R.L."/>
            <person name="O'Shea E.K."/>
        </authorList>
    </citation>
    <scope>ACTIVITY REGULATION</scope>
    <scope>INTERACTION WITH PHO81</scope>
</reference>
<reference key="12">
    <citation type="journal article" date="1996" name="Science">
        <title>Regulation of PHO4 nuclear localization by the PHO80-PHO85 cyclin-CDK complex.</title>
        <authorList>
            <person name="O'Neill E.M."/>
            <person name="Kaffman A."/>
            <person name="Jolly E.R."/>
            <person name="O'Shea E.K."/>
        </authorList>
    </citation>
    <scope>FUNCTION</scope>
    <scope>PHOSPHORYLATION OF PHO4</scope>
</reference>
<reference key="13">
    <citation type="journal article" date="1998" name="Genes Dev.">
        <title>Phosphorylation regulates association of the transcription factor Pho4 with its import receptor Pse1/Kap121.</title>
        <authorList>
            <person name="Kaffman A."/>
            <person name="Rank N.M."/>
            <person name="O'Shea E.K."/>
        </authorList>
    </citation>
    <scope>FUNCTION</scope>
</reference>
<reference key="14">
    <citation type="journal article" date="1998" name="Nature">
        <title>The receptor Msn5 exports the phosphorylated transcription factor Pho4 out of the nucleus.</title>
        <authorList>
            <person name="Kaffman A."/>
            <person name="Rank N.M."/>
            <person name="O'Neill E.M."/>
            <person name="Huang L.S."/>
            <person name="O'Shea E.K."/>
        </authorList>
    </citation>
    <scope>FUNCTION</scope>
    <scope>SUBCELLULAR LOCATION</scope>
</reference>
<reference key="15">
    <citation type="journal article" date="2004" name="Curr. Genet.">
        <title>The yeast Pho80-Pho85 cyclin-CDK complex has multiple substrates.</title>
        <authorList>
            <person name="Waters N.C."/>
            <person name="Knight J.P."/>
            <person name="Creasy C.L."/>
            <person name="Bergman L.W."/>
        </authorList>
    </citation>
    <scope>PHOSPHORYLATION AT SER-234 AND SER-267</scope>
    <scope>PHOSPHORYLATION OF PHO4 AND PHO81</scope>
</reference>
<reference key="16">
    <citation type="journal article" date="2005" name="EMBO J.">
        <title>Regulation of G0 entry by the Pho80-Pho85 cyclin-CDK complex.</title>
        <authorList>
            <person name="Wanke V."/>
            <person name="Pedruzzi I."/>
            <person name="Cameroni E."/>
            <person name="Dubouloz F."/>
            <person name="De Virgilio C."/>
        </authorList>
    </citation>
    <scope>FUNCTION</scope>
    <scope>PHOSPHORYLATION OF RIM15</scope>
</reference>
<reference key="17">
    <citation type="journal article" date="2006" name="Mol. Cell">
        <title>Mapping pathways and phenotypes by systematic gene overexpression.</title>
        <authorList>
            <person name="Sopko R."/>
            <person name="Huang D."/>
            <person name="Preston N."/>
            <person name="Chua G."/>
            <person name="Papp B."/>
            <person name="Kafadar K."/>
            <person name="Snyder M."/>
            <person name="Oliver S.G."/>
            <person name="Cyert M."/>
            <person name="Hughes T.R."/>
            <person name="Boone C."/>
            <person name="Andrews B.J."/>
        </authorList>
    </citation>
    <scope>PHOSPHORYLATION OF CRZ1</scope>
</reference>
<sequence length="293" mass="33227">MESTSGERSENIHEDQGIPKVILPADFNKCSRTDLVVLISRMLVSLIAINENSATKKSDDQITLTRYHSKIPPNISIFNYFIRLTKFSSLEHCVLMTSLYYIDLLQTVYPDFTLNSLTAHRFLLTATTVATKGLCDSFSTNAHYAKVGGVRCHELNILENDFLKRVNYRIIPRDHNITLCSIEQKQKKFVIDKNALGSLDLDSYSYVNRPKSGYNVLDKYYRRIVQLVGSFNASPDKSRKVDYVLPPNIDIVSESGSQTTQLKGSSSPNSHSSQKRYSEAKDAHIYNKRSKPD</sequence>
<protein>
    <recommendedName>
        <fullName>PHO85 cyclin PHO80</fullName>
    </recommendedName>
    <alternativeName>
        <fullName>Aminoglycoside antibiotic sensitivity protein 3</fullName>
    </alternativeName>
    <alternativeName>
        <fullName>Phosphate system cyclin PHO80</fullName>
    </alternativeName>
</protein>
<dbReference type="EMBL" id="X07464">
    <property type="protein sequence ID" value="CAA30347.1"/>
    <property type="molecule type" value="Genomic_DNA"/>
</dbReference>
<dbReference type="EMBL" id="U43491">
    <property type="protein sequence ID" value="AAC49479.1"/>
    <property type="molecule type" value="Genomic_DNA"/>
</dbReference>
<dbReference type="EMBL" id="Z74743">
    <property type="protein sequence ID" value="CAA99000.1"/>
    <property type="molecule type" value="Genomic_DNA"/>
</dbReference>
<dbReference type="EMBL" id="Y00382">
    <property type="protein sequence ID" value="CAA68454.1"/>
    <property type="molecule type" value="Genomic_DNA"/>
</dbReference>
<dbReference type="EMBL" id="M60624">
    <property type="protein sequence ID" value="AAA34869.1"/>
    <property type="molecule type" value="Genomic_DNA"/>
</dbReference>
<dbReference type="EMBL" id="M60625">
    <property type="protein sequence ID" value="AAA34870.1"/>
    <property type="molecule type" value="Genomic_DNA"/>
</dbReference>
<dbReference type="EMBL" id="BK006948">
    <property type="protein sequence ID" value="DAA10782.1"/>
    <property type="molecule type" value="Genomic_DNA"/>
</dbReference>
<dbReference type="PIR" id="S61983">
    <property type="entry name" value="S61983"/>
</dbReference>
<dbReference type="RefSeq" id="NP_014642.1">
    <property type="nucleotide sequence ID" value="NM_001183255.1"/>
</dbReference>
<dbReference type="PDB" id="2PK9">
    <property type="method" value="X-ray"/>
    <property type="resolution" value="2.91 A"/>
    <property type="chains" value="B/D=1-293"/>
</dbReference>
<dbReference type="PDB" id="2PMI">
    <property type="method" value="X-ray"/>
    <property type="resolution" value="2.90 A"/>
    <property type="chains" value="B/D=1-293"/>
</dbReference>
<dbReference type="PDBsum" id="2PK9"/>
<dbReference type="PDBsum" id="2PMI"/>
<dbReference type="SMR" id="P20052"/>
<dbReference type="BioGRID" id="34403">
    <property type="interactions" value="566"/>
</dbReference>
<dbReference type="ComplexPortal" id="CPX-1688">
    <property type="entry name" value="PHO80-PHO85 kinase complex"/>
</dbReference>
<dbReference type="DIP" id="DIP-2479N"/>
<dbReference type="FunCoup" id="P20052">
    <property type="interactions" value="245"/>
</dbReference>
<dbReference type="IntAct" id="P20052">
    <property type="interactions" value="8"/>
</dbReference>
<dbReference type="MINT" id="P20052"/>
<dbReference type="STRING" id="4932.YOL001W"/>
<dbReference type="BindingDB" id="P20052"/>
<dbReference type="ChEMBL" id="CHEMBL2111355"/>
<dbReference type="ChEMBL" id="CHEMBL2111410"/>
<dbReference type="iPTMnet" id="P20052"/>
<dbReference type="PaxDb" id="4932-YOL001W"/>
<dbReference type="PeptideAtlas" id="P20052"/>
<dbReference type="EnsemblFungi" id="YOL001W_mRNA">
    <property type="protein sequence ID" value="YOL001W"/>
    <property type="gene ID" value="YOL001W"/>
</dbReference>
<dbReference type="GeneID" id="854161"/>
<dbReference type="KEGG" id="sce:YOL001W"/>
<dbReference type="AGR" id="SGD:S000005361"/>
<dbReference type="SGD" id="S000005361">
    <property type="gene designation" value="PHO80"/>
</dbReference>
<dbReference type="VEuPathDB" id="FungiDB:YOL001W"/>
<dbReference type="eggNOG" id="KOG1674">
    <property type="taxonomic scope" value="Eukaryota"/>
</dbReference>
<dbReference type="GeneTree" id="ENSGT00390000000862"/>
<dbReference type="HOGENOM" id="CLU_061246_1_0_1"/>
<dbReference type="InParanoid" id="P20052"/>
<dbReference type="OMA" id="NDSHNIH"/>
<dbReference type="OrthoDB" id="337735at2759"/>
<dbReference type="BioCyc" id="YEAST:G3O-33418-MONOMER"/>
<dbReference type="BioGRID-ORCS" id="854161">
    <property type="hits" value="1 hit in 10 CRISPR screens"/>
</dbReference>
<dbReference type="EvolutionaryTrace" id="P20052"/>
<dbReference type="PRO" id="PR:P20052"/>
<dbReference type="Proteomes" id="UP000002311">
    <property type="component" value="Chromosome XV"/>
</dbReference>
<dbReference type="RNAct" id="P20052">
    <property type="molecule type" value="protein"/>
</dbReference>
<dbReference type="GO" id="GO:0000307">
    <property type="term" value="C:cyclin-dependent protein kinase holoenzyme complex"/>
    <property type="evidence" value="ECO:0000353"/>
    <property type="project" value="ComplexPortal"/>
</dbReference>
<dbReference type="GO" id="GO:0005737">
    <property type="term" value="C:cytoplasm"/>
    <property type="evidence" value="ECO:0007669"/>
    <property type="project" value="UniProtKB-SubCell"/>
</dbReference>
<dbReference type="GO" id="GO:0005634">
    <property type="term" value="C:nucleus"/>
    <property type="evidence" value="ECO:0000314"/>
    <property type="project" value="SGD"/>
</dbReference>
<dbReference type="GO" id="GO:1990860">
    <property type="term" value="C:Pho85-Pho80 CDK-cyclin complex"/>
    <property type="evidence" value="ECO:0000314"/>
    <property type="project" value="SGD"/>
</dbReference>
<dbReference type="GO" id="GO:0016538">
    <property type="term" value="F:cyclin-dependent protein serine/threonine kinase regulator activity"/>
    <property type="evidence" value="ECO:0000314"/>
    <property type="project" value="SGD"/>
</dbReference>
<dbReference type="GO" id="GO:0019901">
    <property type="term" value="F:protein kinase binding"/>
    <property type="evidence" value="ECO:0007669"/>
    <property type="project" value="InterPro"/>
</dbReference>
<dbReference type="GO" id="GO:0030003">
    <property type="term" value="P:intracellular monoatomic cation homeostasis"/>
    <property type="evidence" value="ECO:0000315"/>
    <property type="project" value="SGD"/>
</dbReference>
<dbReference type="GO" id="GO:0050849">
    <property type="term" value="P:negative regulation of calcium-mediated signaling"/>
    <property type="evidence" value="ECO:0000316"/>
    <property type="project" value="SGD"/>
</dbReference>
<dbReference type="GO" id="GO:0016242">
    <property type="term" value="P:negative regulation of macroautophagy"/>
    <property type="evidence" value="ECO:0000315"/>
    <property type="project" value="SGD"/>
</dbReference>
<dbReference type="GO" id="GO:0045936">
    <property type="term" value="P:negative regulation of phosphate metabolic process"/>
    <property type="evidence" value="ECO:0000314"/>
    <property type="project" value="ComplexPortal"/>
</dbReference>
<dbReference type="GO" id="GO:0000122">
    <property type="term" value="P:negative regulation of transcription by RNA polymerase II"/>
    <property type="evidence" value="ECO:0000316"/>
    <property type="project" value="SGD"/>
</dbReference>
<dbReference type="GO" id="GO:0032880">
    <property type="term" value="P:regulation of protein localization"/>
    <property type="evidence" value="ECO:0000315"/>
    <property type="project" value="SGD"/>
</dbReference>
<dbReference type="GO" id="GO:0042144">
    <property type="term" value="P:vacuole fusion, non-autophagic"/>
    <property type="evidence" value="ECO:0000315"/>
    <property type="project" value="SGD"/>
</dbReference>
<dbReference type="CDD" id="cd20558">
    <property type="entry name" value="CYCLIN_ScPCL7-like"/>
    <property type="match status" value="1"/>
</dbReference>
<dbReference type="FunFam" id="1.10.472.10:FF:000085">
    <property type="entry name" value="Pho80p cyclin"/>
    <property type="match status" value="1"/>
</dbReference>
<dbReference type="Gene3D" id="1.10.472.10">
    <property type="entry name" value="Cyclin-like"/>
    <property type="match status" value="1"/>
</dbReference>
<dbReference type="InterPro" id="IPR013922">
    <property type="entry name" value="Cyclin_PHO80-like"/>
</dbReference>
<dbReference type="PANTHER" id="PTHR15615">
    <property type="match status" value="1"/>
</dbReference>
<dbReference type="PANTHER" id="PTHR15615:SF117">
    <property type="entry name" value="PHO85 CYCLIN PHO80"/>
    <property type="match status" value="1"/>
</dbReference>
<dbReference type="Pfam" id="PF08613">
    <property type="entry name" value="Cyclin"/>
    <property type="match status" value="1"/>
</dbReference>
<feature type="chain" id="PRO_0000080502" description="PHO85 cyclin PHO80">
    <location>
        <begin position="1"/>
        <end position="293"/>
    </location>
</feature>
<feature type="region of interest" description="Disordered" evidence="1">
    <location>
        <begin position="254"/>
        <end position="293"/>
    </location>
</feature>
<feature type="compositionally biased region" description="Polar residues" evidence="1">
    <location>
        <begin position="254"/>
        <end position="272"/>
    </location>
</feature>
<feature type="compositionally biased region" description="Basic and acidic residues" evidence="1">
    <location>
        <begin position="276"/>
        <end position="293"/>
    </location>
</feature>
<feature type="modified residue" description="Phosphoserine; by PHO85" evidence="2">
    <location>
        <position position="234"/>
    </location>
</feature>
<feature type="modified residue" description="Phosphoserine; by PHO85" evidence="2">
    <location>
        <position position="267"/>
    </location>
</feature>
<feature type="mutagenesis site" description="Temperature-sensitive allele." evidence="6">
    <original>L</original>
    <variation>S</variation>
    <location>
        <position position="163"/>
    </location>
</feature>
<feature type="mutagenesis site" description="In PHO80-1." evidence="5">
    <original>G</original>
    <variation>D</variation>
    <location>
        <position position="229"/>
    </location>
</feature>
<feature type="sequence conflict" description="In Ref. 1; CAA30347." evidence="14" ref="1">
    <original>T</original>
    <variation>S</variation>
    <location>
        <position position="65"/>
    </location>
</feature>
<feature type="sequence conflict" description="In Ref. 7; AAA34869/AAA34870." evidence="14" ref="7">
    <original>P</original>
    <variation>S</variation>
    <location>
        <position position="247"/>
    </location>
</feature>
<feature type="sequence conflict" description="In Ref. 7; AAA34869/AAA34870." evidence="14" ref="7">
    <original>E</original>
    <variation>K</variation>
    <location>
        <position position="254"/>
    </location>
</feature>
<feature type="sequence conflict" description="In Ref. 1; CAA30347 and 2; no nucleotide entry." evidence="14" ref="1 2">
    <original>P</original>
    <variation>A</variation>
    <location>
        <position position="292"/>
    </location>
</feature>
<feature type="strand" evidence="15">
    <location>
        <begin position="20"/>
        <end position="22"/>
    </location>
</feature>
<feature type="helix" evidence="16">
    <location>
        <begin position="27"/>
        <end position="29"/>
    </location>
</feature>
<feature type="helix" evidence="16">
    <location>
        <begin position="32"/>
        <end position="51"/>
    </location>
</feature>
<feature type="helix" evidence="16">
    <location>
        <begin position="77"/>
        <end position="86"/>
    </location>
</feature>
<feature type="turn" evidence="16">
    <location>
        <begin position="87"/>
        <end position="89"/>
    </location>
</feature>
<feature type="helix" evidence="16">
    <location>
        <begin position="92"/>
        <end position="108"/>
    </location>
</feature>
<feature type="turn" evidence="15">
    <location>
        <begin position="116"/>
        <end position="118"/>
    </location>
</feature>
<feature type="helix" evidence="16">
    <location>
        <begin position="119"/>
        <end position="134"/>
    </location>
</feature>
<feature type="helix" evidence="16">
    <location>
        <begin position="141"/>
        <end position="148"/>
    </location>
</feature>
<feature type="helix" evidence="16">
    <location>
        <begin position="152"/>
        <end position="164"/>
    </location>
</feature>
<feature type="turn" evidence="16">
    <location>
        <begin position="165"/>
        <end position="168"/>
    </location>
</feature>
<feature type="helix" evidence="16">
    <location>
        <begin position="176"/>
        <end position="183"/>
    </location>
</feature>
<feature type="helix" evidence="16">
    <location>
        <begin position="210"/>
        <end position="213"/>
    </location>
</feature>
<feature type="helix" evidence="16">
    <location>
        <begin position="216"/>
        <end position="227"/>
    </location>
</feature>
<feature type="helix" evidence="16">
    <location>
        <begin position="235"/>
        <end position="237"/>
    </location>
</feature>
<feature type="strand" evidence="15">
    <location>
        <begin position="242"/>
        <end position="244"/>
    </location>
</feature>
<accession>P20052</accession>
<accession>D6W266</accession>
<accession>Q06882</accession>
<accession>Q06883</accession>